<sequence length="118" mass="13370">MARIAGVNIPDNKHTVISLTYIYGVGRTTAQKICATTGVNPAVKIKDLSDEQIEQLRGEVAKFTTEGDLRREINMKIKRLMDLGCYRGLRHRRGLPVRGQRTKTNARTRKGPRKPIRK</sequence>
<dbReference type="EMBL" id="AE016853">
    <property type="protein sequence ID" value="AAO54190.1"/>
    <property type="molecule type" value="Genomic_DNA"/>
</dbReference>
<dbReference type="RefSeq" id="NP_790495.1">
    <property type="nucleotide sequence ID" value="NC_004578.1"/>
</dbReference>
<dbReference type="RefSeq" id="WP_002555467.1">
    <property type="nucleotide sequence ID" value="NC_004578.1"/>
</dbReference>
<dbReference type="SMR" id="Q889U9"/>
<dbReference type="STRING" id="223283.PSPTO_0648"/>
<dbReference type="GeneID" id="96221008"/>
<dbReference type="KEGG" id="pst:PSPTO_0648"/>
<dbReference type="PATRIC" id="fig|223283.9.peg.654"/>
<dbReference type="eggNOG" id="COG0099">
    <property type="taxonomic scope" value="Bacteria"/>
</dbReference>
<dbReference type="HOGENOM" id="CLU_103849_1_2_6"/>
<dbReference type="OrthoDB" id="9803610at2"/>
<dbReference type="PhylomeDB" id="Q889U9"/>
<dbReference type="Proteomes" id="UP000002515">
    <property type="component" value="Chromosome"/>
</dbReference>
<dbReference type="GO" id="GO:0005829">
    <property type="term" value="C:cytosol"/>
    <property type="evidence" value="ECO:0007669"/>
    <property type="project" value="TreeGrafter"/>
</dbReference>
<dbReference type="GO" id="GO:0015935">
    <property type="term" value="C:small ribosomal subunit"/>
    <property type="evidence" value="ECO:0007669"/>
    <property type="project" value="TreeGrafter"/>
</dbReference>
<dbReference type="GO" id="GO:0019843">
    <property type="term" value="F:rRNA binding"/>
    <property type="evidence" value="ECO:0007669"/>
    <property type="project" value="UniProtKB-UniRule"/>
</dbReference>
<dbReference type="GO" id="GO:0003735">
    <property type="term" value="F:structural constituent of ribosome"/>
    <property type="evidence" value="ECO:0007669"/>
    <property type="project" value="InterPro"/>
</dbReference>
<dbReference type="GO" id="GO:0000049">
    <property type="term" value="F:tRNA binding"/>
    <property type="evidence" value="ECO:0007669"/>
    <property type="project" value="UniProtKB-UniRule"/>
</dbReference>
<dbReference type="GO" id="GO:0006412">
    <property type="term" value="P:translation"/>
    <property type="evidence" value="ECO:0007669"/>
    <property type="project" value="UniProtKB-UniRule"/>
</dbReference>
<dbReference type="FunFam" id="1.10.8.50:FF:000001">
    <property type="entry name" value="30S ribosomal protein S13"/>
    <property type="match status" value="1"/>
</dbReference>
<dbReference type="FunFam" id="4.10.910.10:FF:000001">
    <property type="entry name" value="30S ribosomal protein S13"/>
    <property type="match status" value="1"/>
</dbReference>
<dbReference type="Gene3D" id="1.10.8.50">
    <property type="match status" value="1"/>
</dbReference>
<dbReference type="Gene3D" id="4.10.910.10">
    <property type="entry name" value="30s ribosomal protein s13, domain 2"/>
    <property type="match status" value="1"/>
</dbReference>
<dbReference type="HAMAP" id="MF_01315">
    <property type="entry name" value="Ribosomal_uS13"/>
    <property type="match status" value="1"/>
</dbReference>
<dbReference type="InterPro" id="IPR027437">
    <property type="entry name" value="Rbsml_uS13_C"/>
</dbReference>
<dbReference type="InterPro" id="IPR001892">
    <property type="entry name" value="Ribosomal_uS13"/>
</dbReference>
<dbReference type="InterPro" id="IPR010979">
    <property type="entry name" value="Ribosomal_uS13-like_H2TH"/>
</dbReference>
<dbReference type="InterPro" id="IPR019980">
    <property type="entry name" value="Ribosomal_uS13_bac-type"/>
</dbReference>
<dbReference type="InterPro" id="IPR018269">
    <property type="entry name" value="Ribosomal_uS13_CS"/>
</dbReference>
<dbReference type="NCBIfam" id="TIGR03631">
    <property type="entry name" value="uS13_bact"/>
    <property type="match status" value="1"/>
</dbReference>
<dbReference type="PANTHER" id="PTHR10871">
    <property type="entry name" value="30S RIBOSOMAL PROTEIN S13/40S RIBOSOMAL PROTEIN S18"/>
    <property type="match status" value="1"/>
</dbReference>
<dbReference type="PANTHER" id="PTHR10871:SF1">
    <property type="entry name" value="SMALL RIBOSOMAL SUBUNIT PROTEIN US13M"/>
    <property type="match status" value="1"/>
</dbReference>
<dbReference type="Pfam" id="PF00416">
    <property type="entry name" value="Ribosomal_S13"/>
    <property type="match status" value="1"/>
</dbReference>
<dbReference type="PIRSF" id="PIRSF002134">
    <property type="entry name" value="Ribosomal_S13"/>
    <property type="match status" value="1"/>
</dbReference>
<dbReference type="SUPFAM" id="SSF46946">
    <property type="entry name" value="S13-like H2TH domain"/>
    <property type="match status" value="1"/>
</dbReference>
<dbReference type="PROSITE" id="PS00646">
    <property type="entry name" value="RIBOSOMAL_S13_1"/>
    <property type="match status" value="1"/>
</dbReference>
<dbReference type="PROSITE" id="PS50159">
    <property type="entry name" value="RIBOSOMAL_S13_2"/>
    <property type="match status" value="1"/>
</dbReference>
<keyword id="KW-1185">Reference proteome</keyword>
<keyword id="KW-0687">Ribonucleoprotein</keyword>
<keyword id="KW-0689">Ribosomal protein</keyword>
<keyword id="KW-0694">RNA-binding</keyword>
<keyword id="KW-0699">rRNA-binding</keyword>
<keyword id="KW-0820">tRNA-binding</keyword>
<protein>
    <recommendedName>
        <fullName evidence="1">Small ribosomal subunit protein uS13</fullName>
    </recommendedName>
    <alternativeName>
        <fullName evidence="3">30S ribosomal protein S13</fullName>
    </alternativeName>
</protein>
<feature type="chain" id="PRO_0000132123" description="Small ribosomal subunit protein uS13">
    <location>
        <begin position="1"/>
        <end position="118"/>
    </location>
</feature>
<feature type="region of interest" description="Disordered" evidence="2">
    <location>
        <begin position="93"/>
        <end position="118"/>
    </location>
</feature>
<comment type="function">
    <text evidence="1">Located at the top of the head of the 30S subunit, it contacts several helices of the 16S rRNA. In the 70S ribosome it contacts the 23S rRNA (bridge B1a) and protein L5 of the 50S subunit (bridge B1b), connecting the 2 subunits; these bridges are implicated in subunit movement. Contacts the tRNAs in the A and P-sites.</text>
</comment>
<comment type="subunit">
    <text evidence="1">Part of the 30S ribosomal subunit. Forms a loose heterodimer with protein S19. Forms two bridges to the 50S subunit in the 70S ribosome.</text>
</comment>
<comment type="similarity">
    <text evidence="1">Belongs to the universal ribosomal protein uS13 family.</text>
</comment>
<organism>
    <name type="scientific">Pseudomonas syringae pv. tomato (strain ATCC BAA-871 / DC3000)</name>
    <dbReference type="NCBI Taxonomy" id="223283"/>
    <lineage>
        <taxon>Bacteria</taxon>
        <taxon>Pseudomonadati</taxon>
        <taxon>Pseudomonadota</taxon>
        <taxon>Gammaproteobacteria</taxon>
        <taxon>Pseudomonadales</taxon>
        <taxon>Pseudomonadaceae</taxon>
        <taxon>Pseudomonas</taxon>
    </lineage>
</organism>
<name>RS13_PSESM</name>
<gene>
    <name evidence="1" type="primary">rpsM</name>
    <name type="ordered locus">PSPTO_0648</name>
</gene>
<proteinExistence type="inferred from homology"/>
<evidence type="ECO:0000255" key="1">
    <source>
        <dbReference type="HAMAP-Rule" id="MF_01315"/>
    </source>
</evidence>
<evidence type="ECO:0000256" key="2">
    <source>
        <dbReference type="SAM" id="MobiDB-lite"/>
    </source>
</evidence>
<evidence type="ECO:0000305" key="3"/>
<reference key="1">
    <citation type="journal article" date="2003" name="Proc. Natl. Acad. Sci. U.S.A.">
        <title>The complete genome sequence of the Arabidopsis and tomato pathogen Pseudomonas syringae pv. tomato DC3000.</title>
        <authorList>
            <person name="Buell C.R."/>
            <person name="Joardar V."/>
            <person name="Lindeberg M."/>
            <person name="Selengut J."/>
            <person name="Paulsen I.T."/>
            <person name="Gwinn M.L."/>
            <person name="Dodson R.J."/>
            <person name="DeBoy R.T."/>
            <person name="Durkin A.S."/>
            <person name="Kolonay J.F."/>
            <person name="Madupu R."/>
            <person name="Daugherty S.C."/>
            <person name="Brinkac L.M."/>
            <person name="Beanan M.J."/>
            <person name="Haft D.H."/>
            <person name="Nelson W.C."/>
            <person name="Davidsen T.M."/>
            <person name="Zafar N."/>
            <person name="Zhou L."/>
            <person name="Liu J."/>
            <person name="Yuan Q."/>
            <person name="Khouri H.M."/>
            <person name="Fedorova N.B."/>
            <person name="Tran B."/>
            <person name="Russell D."/>
            <person name="Berry K.J."/>
            <person name="Utterback T.R."/>
            <person name="Van Aken S.E."/>
            <person name="Feldblyum T.V."/>
            <person name="D'Ascenzo M."/>
            <person name="Deng W.-L."/>
            <person name="Ramos A.R."/>
            <person name="Alfano J.R."/>
            <person name="Cartinhour S."/>
            <person name="Chatterjee A.K."/>
            <person name="Delaney T.P."/>
            <person name="Lazarowitz S.G."/>
            <person name="Martin G.B."/>
            <person name="Schneider D.J."/>
            <person name="Tang X."/>
            <person name="Bender C.L."/>
            <person name="White O."/>
            <person name="Fraser C.M."/>
            <person name="Collmer A."/>
        </authorList>
    </citation>
    <scope>NUCLEOTIDE SEQUENCE [LARGE SCALE GENOMIC DNA]</scope>
    <source>
        <strain>ATCC BAA-871 / DC3000</strain>
    </source>
</reference>
<accession>Q889U9</accession>